<accession>A1AVH0</accession>
<protein>
    <recommendedName>
        <fullName evidence="1">Gamma-glutamyl phosphate reductase</fullName>
        <shortName evidence="1">GPR</shortName>
        <ecNumber evidence="1">1.2.1.41</ecNumber>
    </recommendedName>
    <alternativeName>
        <fullName evidence="1">Glutamate-5-semialdehyde dehydrogenase</fullName>
    </alternativeName>
    <alternativeName>
        <fullName evidence="1">Glutamyl-gamma-semialdehyde dehydrogenase</fullName>
        <shortName evidence="1">GSA dehydrogenase</shortName>
    </alternativeName>
</protein>
<name>PROA_RUTMC</name>
<keyword id="KW-0028">Amino-acid biosynthesis</keyword>
<keyword id="KW-0963">Cytoplasm</keyword>
<keyword id="KW-0521">NADP</keyword>
<keyword id="KW-0560">Oxidoreductase</keyword>
<keyword id="KW-0641">Proline biosynthesis</keyword>
<comment type="function">
    <text evidence="1">Catalyzes the NADPH-dependent reduction of L-glutamate 5-phosphate into L-glutamate 5-semialdehyde and phosphate. The product spontaneously undergoes cyclization to form 1-pyrroline-5-carboxylate.</text>
</comment>
<comment type="catalytic activity">
    <reaction evidence="1">
        <text>L-glutamate 5-semialdehyde + phosphate + NADP(+) = L-glutamyl 5-phosphate + NADPH + H(+)</text>
        <dbReference type="Rhea" id="RHEA:19541"/>
        <dbReference type="ChEBI" id="CHEBI:15378"/>
        <dbReference type="ChEBI" id="CHEBI:43474"/>
        <dbReference type="ChEBI" id="CHEBI:57783"/>
        <dbReference type="ChEBI" id="CHEBI:58066"/>
        <dbReference type="ChEBI" id="CHEBI:58274"/>
        <dbReference type="ChEBI" id="CHEBI:58349"/>
        <dbReference type="EC" id="1.2.1.41"/>
    </reaction>
</comment>
<comment type="pathway">
    <text evidence="1">Amino-acid biosynthesis; L-proline biosynthesis; L-glutamate 5-semialdehyde from L-glutamate: step 2/2.</text>
</comment>
<comment type="subcellular location">
    <subcellularLocation>
        <location evidence="1">Cytoplasm</location>
    </subcellularLocation>
</comment>
<comment type="similarity">
    <text evidence="1">Belongs to the gamma-glutamyl phosphate reductase family.</text>
</comment>
<reference key="1">
    <citation type="journal article" date="2007" name="Science">
        <title>The Calyptogena magnifica chemoautotrophic symbiont genome.</title>
        <authorList>
            <person name="Newton I.L.G."/>
            <person name="Woyke T."/>
            <person name="Auchtung T.A."/>
            <person name="Dilly G.F."/>
            <person name="Dutton R.J."/>
            <person name="Fisher M.C."/>
            <person name="Fontanez K.M."/>
            <person name="Lau E."/>
            <person name="Stewart F.J."/>
            <person name="Richardson P.M."/>
            <person name="Barry K.W."/>
            <person name="Saunders E."/>
            <person name="Detter J.C."/>
            <person name="Wu D."/>
            <person name="Eisen J.A."/>
            <person name="Cavanaugh C.M."/>
        </authorList>
    </citation>
    <scope>NUCLEOTIDE SEQUENCE [LARGE SCALE GENOMIC DNA]</scope>
</reference>
<evidence type="ECO:0000255" key="1">
    <source>
        <dbReference type="HAMAP-Rule" id="MF_00412"/>
    </source>
</evidence>
<organism>
    <name type="scientific">Ruthia magnifica subsp. Calyptogena magnifica</name>
    <dbReference type="NCBI Taxonomy" id="413404"/>
    <lineage>
        <taxon>Bacteria</taxon>
        <taxon>Pseudomonadati</taxon>
        <taxon>Pseudomonadota</taxon>
        <taxon>Gammaproteobacteria</taxon>
        <taxon>Candidatus Pseudothioglobaceae</taxon>
        <taxon>Candidatus Ruthturnera</taxon>
    </lineage>
</organism>
<gene>
    <name evidence="1" type="primary">proA</name>
    <name type="ordered locus">Rmag_0133</name>
</gene>
<proteinExistence type="inferred from homology"/>
<dbReference type="EC" id="1.2.1.41" evidence="1"/>
<dbReference type="EMBL" id="CP000488">
    <property type="protein sequence ID" value="ABL01927.1"/>
    <property type="molecule type" value="Genomic_DNA"/>
</dbReference>
<dbReference type="RefSeq" id="WP_011737553.1">
    <property type="nucleotide sequence ID" value="NC_008610.1"/>
</dbReference>
<dbReference type="SMR" id="A1AVH0"/>
<dbReference type="STRING" id="413404.Rmag_0133"/>
<dbReference type="KEGG" id="rma:Rmag_0133"/>
<dbReference type="eggNOG" id="COG0014">
    <property type="taxonomic scope" value="Bacteria"/>
</dbReference>
<dbReference type="HOGENOM" id="CLU_030231_0_0_6"/>
<dbReference type="OrthoDB" id="9809970at2"/>
<dbReference type="UniPathway" id="UPA00098">
    <property type="reaction ID" value="UER00360"/>
</dbReference>
<dbReference type="Proteomes" id="UP000002587">
    <property type="component" value="Chromosome"/>
</dbReference>
<dbReference type="GO" id="GO:0005737">
    <property type="term" value="C:cytoplasm"/>
    <property type="evidence" value="ECO:0007669"/>
    <property type="project" value="UniProtKB-SubCell"/>
</dbReference>
<dbReference type="GO" id="GO:0004350">
    <property type="term" value="F:glutamate-5-semialdehyde dehydrogenase activity"/>
    <property type="evidence" value="ECO:0007669"/>
    <property type="project" value="UniProtKB-UniRule"/>
</dbReference>
<dbReference type="GO" id="GO:0050661">
    <property type="term" value="F:NADP binding"/>
    <property type="evidence" value="ECO:0007669"/>
    <property type="project" value="InterPro"/>
</dbReference>
<dbReference type="GO" id="GO:0055129">
    <property type="term" value="P:L-proline biosynthetic process"/>
    <property type="evidence" value="ECO:0007669"/>
    <property type="project" value="UniProtKB-UniRule"/>
</dbReference>
<dbReference type="CDD" id="cd07079">
    <property type="entry name" value="ALDH_F18-19_ProA-GPR"/>
    <property type="match status" value="1"/>
</dbReference>
<dbReference type="FunFam" id="3.40.309.10:FF:000006">
    <property type="entry name" value="Gamma-glutamyl phosphate reductase"/>
    <property type="match status" value="1"/>
</dbReference>
<dbReference type="Gene3D" id="3.40.605.10">
    <property type="entry name" value="Aldehyde Dehydrogenase, Chain A, domain 1"/>
    <property type="match status" value="1"/>
</dbReference>
<dbReference type="Gene3D" id="3.40.309.10">
    <property type="entry name" value="Aldehyde Dehydrogenase, Chain A, domain 2"/>
    <property type="match status" value="1"/>
</dbReference>
<dbReference type="HAMAP" id="MF_00412">
    <property type="entry name" value="ProA"/>
    <property type="match status" value="1"/>
</dbReference>
<dbReference type="InterPro" id="IPR016161">
    <property type="entry name" value="Ald_DH/histidinol_DH"/>
</dbReference>
<dbReference type="InterPro" id="IPR016163">
    <property type="entry name" value="Ald_DH_C"/>
</dbReference>
<dbReference type="InterPro" id="IPR016162">
    <property type="entry name" value="Ald_DH_N"/>
</dbReference>
<dbReference type="InterPro" id="IPR015590">
    <property type="entry name" value="Aldehyde_DH_dom"/>
</dbReference>
<dbReference type="InterPro" id="IPR020593">
    <property type="entry name" value="G-glutamylP_reductase_CS"/>
</dbReference>
<dbReference type="InterPro" id="IPR012134">
    <property type="entry name" value="Glu-5-SA_DH"/>
</dbReference>
<dbReference type="InterPro" id="IPR000965">
    <property type="entry name" value="GPR_dom"/>
</dbReference>
<dbReference type="NCBIfam" id="NF001221">
    <property type="entry name" value="PRK00197.1"/>
    <property type="match status" value="1"/>
</dbReference>
<dbReference type="NCBIfam" id="TIGR00407">
    <property type="entry name" value="proA"/>
    <property type="match status" value="1"/>
</dbReference>
<dbReference type="PANTHER" id="PTHR11063:SF8">
    <property type="entry name" value="DELTA-1-PYRROLINE-5-CARBOXYLATE SYNTHASE"/>
    <property type="match status" value="1"/>
</dbReference>
<dbReference type="PANTHER" id="PTHR11063">
    <property type="entry name" value="GLUTAMATE SEMIALDEHYDE DEHYDROGENASE"/>
    <property type="match status" value="1"/>
</dbReference>
<dbReference type="Pfam" id="PF00171">
    <property type="entry name" value="Aldedh"/>
    <property type="match status" value="1"/>
</dbReference>
<dbReference type="PIRSF" id="PIRSF000151">
    <property type="entry name" value="GPR"/>
    <property type="match status" value="1"/>
</dbReference>
<dbReference type="SUPFAM" id="SSF53720">
    <property type="entry name" value="ALDH-like"/>
    <property type="match status" value="1"/>
</dbReference>
<dbReference type="PROSITE" id="PS01223">
    <property type="entry name" value="PROA"/>
    <property type="match status" value="1"/>
</dbReference>
<feature type="chain" id="PRO_1000080490" description="Gamma-glutamyl phosphate reductase">
    <location>
        <begin position="1"/>
        <end position="419"/>
    </location>
</feature>
<sequence length="419" mass="45536">MDSIKNLIVTLGENAKNAAKTLRCATTVAKNNTLINIASQIDQNRASIFKANNQDLVNGKNKGLETTLLDRLMLDEERLNGVIESLNQIINLPDPIGEITDLKYQPSGIQVGKMRVPLGVLGIIYESRPNVTIDAAALCLKSGNSVILRGGSEAIHSNYALYTCVRQGIKQAGLNENCAQLINTQNHEAVIELVKASDYVDAIIPRGGKGLVEAISNSAKTPVIKHLNGICHTYIDKDADKKKAISIAFNAKTRRYGVCNATETLLVHACAVSRILPKLIAQYLTKGVELRGCKETLKLSNKIIAATEKDWNTEYLDAILSIRIVNSMSEAIKHIDKHGSGHTESIVSENYTRSRRFITEVDSASVMINASTGFADGFEYGLGAEIGISTDKFHVRGPVGLEGLTSQKFIVLGDGHIRQ</sequence>